<gene>
    <name evidence="1" type="primary">queF</name>
    <name type="ordered locus">PA14_27850</name>
</gene>
<feature type="chain" id="PRO_1000062351" description="NADPH-dependent 7-cyano-7-deazaguanine reductase">
    <location>
        <begin position="1"/>
        <end position="276"/>
    </location>
</feature>
<feature type="active site" description="Thioimide intermediate" evidence="1">
    <location>
        <position position="184"/>
    </location>
</feature>
<feature type="active site" description="Proton donor" evidence="1">
    <location>
        <position position="191"/>
    </location>
</feature>
<feature type="binding site" evidence="1">
    <location>
        <begin position="83"/>
        <end position="85"/>
    </location>
    <ligand>
        <name>substrate</name>
    </ligand>
</feature>
<feature type="binding site" evidence="1">
    <location>
        <begin position="85"/>
        <end position="86"/>
    </location>
    <ligand>
        <name>NADPH</name>
        <dbReference type="ChEBI" id="CHEBI:57783"/>
    </ligand>
</feature>
<feature type="binding site" evidence="1">
    <location>
        <begin position="223"/>
        <end position="224"/>
    </location>
    <ligand>
        <name>substrate</name>
    </ligand>
</feature>
<feature type="binding site" evidence="1">
    <location>
        <begin position="252"/>
        <end position="253"/>
    </location>
    <ligand>
        <name>NADPH</name>
        <dbReference type="ChEBI" id="CHEBI:57783"/>
    </ligand>
</feature>
<accession>Q02NW3</accession>
<name>QUEF_PSEAB</name>
<comment type="function">
    <text evidence="1">Catalyzes the NADPH-dependent reduction of 7-cyano-7-deazaguanine (preQ0) to 7-aminomethyl-7-deazaguanine (preQ1).</text>
</comment>
<comment type="catalytic activity">
    <reaction evidence="1">
        <text>7-aminomethyl-7-carbaguanine + 2 NADP(+) = 7-cyano-7-deazaguanine + 2 NADPH + 3 H(+)</text>
        <dbReference type="Rhea" id="RHEA:13409"/>
        <dbReference type="ChEBI" id="CHEBI:15378"/>
        <dbReference type="ChEBI" id="CHEBI:45075"/>
        <dbReference type="ChEBI" id="CHEBI:57783"/>
        <dbReference type="ChEBI" id="CHEBI:58349"/>
        <dbReference type="ChEBI" id="CHEBI:58703"/>
        <dbReference type="EC" id="1.7.1.13"/>
    </reaction>
</comment>
<comment type="pathway">
    <text evidence="1">tRNA modification; tRNA-queuosine biosynthesis.</text>
</comment>
<comment type="subunit">
    <text evidence="1">Homodimer.</text>
</comment>
<comment type="subcellular location">
    <subcellularLocation>
        <location evidence="1">Cytoplasm</location>
    </subcellularLocation>
</comment>
<comment type="similarity">
    <text evidence="1">Belongs to the GTP cyclohydrolase I family. QueF type 2 subfamily.</text>
</comment>
<reference key="1">
    <citation type="journal article" date="2006" name="Genome Biol.">
        <title>Genomic analysis reveals that Pseudomonas aeruginosa virulence is combinatorial.</title>
        <authorList>
            <person name="Lee D.G."/>
            <person name="Urbach J.M."/>
            <person name="Wu G."/>
            <person name="Liberati N.T."/>
            <person name="Feinbaum R.L."/>
            <person name="Miyata S."/>
            <person name="Diggins L.T."/>
            <person name="He J."/>
            <person name="Saucier M."/>
            <person name="Deziel E."/>
            <person name="Friedman L."/>
            <person name="Li L."/>
            <person name="Grills G."/>
            <person name="Montgomery K."/>
            <person name="Kucherlapati R."/>
            <person name="Rahme L.G."/>
            <person name="Ausubel F.M."/>
        </authorList>
    </citation>
    <scope>NUCLEOTIDE SEQUENCE [LARGE SCALE GENOMIC DNA]</scope>
    <source>
        <strain>UCBPP-PA14</strain>
    </source>
</reference>
<proteinExistence type="inferred from homology"/>
<evidence type="ECO:0000255" key="1">
    <source>
        <dbReference type="HAMAP-Rule" id="MF_00817"/>
    </source>
</evidence>
<keyword id="KW-0963">Cytoplasm</keyword>
<keyword id="KW-0521">NADP</keyword>
<keyword id="KW-0560">Oxidoreductase</keyword>
<keyword id="KW-0671">Queuosine biosynthesis</keyword>
<sequence>MQHPAEHSPLGKTSEYVSSYTPSLLFPISRTAKWAELGLSAETLPYRGVDIWNCYELSWLTPAGKPVVAIGEFSIPADSPNIIESKSFKLYLNSLNQSAFDSREALRAVLQKDLSAAAGAPVGVRLRSLDEVAEEGIGRLPGRCIDELDIAVDGYEQPRPELLRCDAGRIVEEQLYSHLLKSNCPVTGQPDWGTLVVDYRGPALDPASLLAYLVSFRQHQDFHEQCVERIFLDLQRLLQPQALSVYARYVRRGGLDINPYRSLAEVAPDNRRLVRQ</sequence>
<dbReference type="EC" id="1.7.1.13" evidence="1"/>
<dbReference type="EMBL" id="CP000438">
    <property type="protein sequence ID" value="ABJ12042.1"/>
    <property type="molecule type" value="Genomic_DNA"/>
</dbReference>
<dbReference type="RefSeq" id="WP_003098780.1">
    <property type="nucleotide sequence ID" value="NZ_CP034244.1"/>
</dbReference>
<dbReference type="SMR" id="Q02NW3"/>
<dbReference type="KEGG" id="pau:PA14_27850"/>
<dbReference type="PseudoCAP" id="PA14_27850"/>
<dbReference type="HOGENOM" id="CLU_054738_0_0_6"/>
<dbReference type="BioCyc" id="PAER208963:G1G74-2318-MONOMER"/>
<dbReference type="UniPathway" id="UPA00392"/>
<dbReference type="Proteomes" id="UP000000653">
    <property type="component" value="Chromosome"/>
</dbReference>
<dbReference type="GO" id="GO:0005737">
    <property type="term" value="C:cytoplasm"/>
    <property type="evidence" value="ECO:0007669"/>
    <property type="project" value="UniProtKB-SubCell"/>
</dbReference>
<dbReference type="GO" id="GO:0033739">
    <property type="term" value="F:preQ1 synthase activity"/>
    <property type="evidence" value="ECO:0007669"/>
    <property type="project" value="UniProtKB-UniRule"/>
</dbReference>
<dbReference type="GO" id="GO:0008616">
    <property type="term" value="P:queuosine biosynthetic process"/>
    <property type="evidence" value="ECO:0007669"/>
    <property type="project" value="UniProtKB-UniRule"/>
</dbReference>
<dbReference type="GO" id="GO:0006400">
    <property type="term" value="P:tRNA modification"/>
    <property type="evidence" value="ECO:0007669"/>
    <property type="project" value="UniProtKB-UniRule"/>
</dbReference>
<dbReference type="Gene3D" id="3.30.1130.10">
    <property type="match status" value="2"/>
</dbReference>
<dbReference type="HAMAP" id="MF_00817">
    <property type="entry name" value="QueF_type2"/>
    <property type="match status" value="1"/>
</dbReference>
<dbReference type="InterPro" id="IPR043133">
    <property type="entry name" value="GTP-CH-I_C/QueF"/>
</dbReference>
<dbReference type="InterPro" id="IPR050084">
    <property type="entry name" value="NADPH_dep_7-cyano-7-deazaG_red"/>
</dbReference>
<dbReference type="InterPro" id="IPR029500">
    <property type="entry name" value="QueF"/>
</dbReference>
<dbReference type="InterPro" id="IPR029139">
    <property type="entry name" value="QueF_N"/>
</dbReference>
<dbReference type="InterPro" id="IPR016428">
    <property type="entry name" value="QueF_type2"/>
</dbReference>
<dbReference type="NCBIfam" id="TIGR03138">
    <property type="entry name" value="QueF"/>
    <property type="match status" value="1"/>
</dbReference>
<dbReference type="PANTHER" id="PTHR34354">
    <property type="entry name" value="NADPH-DEPENDENT 7-CYANO-7-DEAZAGUANINE REDUCTASE"/>
    <property type="match status" value="1"/>
</dbReference>
<dbReference type="PANTHER" id="PTHR34354:SF1">
    <property type="entry name" value="NADPH-DEPENDENT 7-CYANO-7-DEAZAGUANINE REDUCTASE"/>
    <property type="match status" value="1"/>
</dbReference>
<dbReference type="Pfam" id="PF14489">
    <property type="entry name" value="QueF"/>
    <property type="match status" value="1"/>
</dbReference>
<dbReference type="Pfam" id="PF14819">
    <property type="entry name" value="QueF_N"/>
    <property type="match status" value="1"/>
</dbReference>
<dbReference type="PIRSF" id="PIRSF004750">
    <property type="entry name" value="Nitrile_oxidored_YqcD_prd"/>
    <property type="match status" value="1"/>
</dbReference>
<dbReference type="SUPFAM" id="SSF55620">
    <property type="entry name" value="Tetrahydrobiopterin biosynthesis enzymes-like"/>
    <property type="match status" value="1"/>
</dbReference>
<protein>
    <recommendedName>
        <fullName evidence="1">NADPH-dependent 7-cyano-7-deazaguanine reductase</fullName>
        <ecNumber evidence="1">1.7.1.13</ecNumber>
    </recommendedName>
    <alternativeName>
        <fullName evidence="1">7-cyano-7-carbaguanine reductase</fullName>
    </alternativeName>
    <alternativeName>
        <fullName evidence="1">NADPH-dependent nitrile oxidoreductase</fullName>
    </alternativeName>
    <alternativeName>
        <fullName evidence="1">PreQ(0) reductase</fullName>
    </alternativeName>
</protein>
<organism>
    <name type="scientific">Pseudomonas aeruginosa (strain UCBPP-PA14)</name>
    <dbReference type="NCBI Taxonomy" id="208963"/>
    <lineage>
        <taxon>Bacteria</taxon>
        <taxon>Pseudomonadati</taxon>
        <taxon>Pseudomonadota</taxon>
        <taxon>Gammaproteobacteria</taxon>
        <taxon>Pseudomonadales</taxon>
        <taxon>Pseudomonadaceae</taxon>
        <taxon>Pseudomonas</taxon>
    </lineage>
</organism>